<sequence>MPEDAIGQQVPPEQEAAGAEPTSAARERHATLSLELTEHQYRYYVLDAPTISDAEFDERLRELAALEAEFPALRTPDSPTQRVGGAFSTDFTPVAHAERMMSLDNAFTDEELDAWAERVERDAGGPVPYLCELKVDGLAINLTYERGRLVRAATRGDGRTGEDVTANVRSIRDVPAELAPSAEFPEIPGLLEVRGEIYFPIAGFADLNAGLVEQGKAPFANPRNAAAGSLRQKDPRITASRPLRLVVHGIGARQGWQPSTQSESYAALRAWGLPTSDRWRVVPDLAGVAEYIAHYATHRHDVEHEIDGVVVKVDPVSIQGRLGSTSRAPRWAIAFKYPPEEVNTRLLDIDVNVGRTGRVTPFAVLEPVRVAGSTVALATLHNAREVRRKGVLIGDTVVIRKAGDVIPEVLGPVVELRPPDARSFVMPSTCPCCGTPLAPAKEGDVDIRCPNTRSCPAQLRERVFHLAGRGAFDIEVLGYKGAAALLDAQIITDEGDLFALDAAQLTRSPFFVNKDGSLGSNAVKLLDNLTVAKERELWRVLVALSIRHVGPTAAQALARHFRSIEAIDQAGEEELSAVDGVGPTIAASVREWFAVAWHREVVRKWAEAGVRMTEEAVDEGPRPLEGMTVVVTGTLAGFSRDQAAEAIQSRGGKVTGSVSKKTAFVVVGENPGTKADKAASLKVPVLDEEGFRVLLDAGPDAAREVARVED</sequence>
<gene>
    <name evidence="1" type="primary">ligA</name>
    <name type="ordered locus">Sare_1109</name>
</gene>
<name>DNLJ_SALAI</name>
<organism>
    <name type="scientific">Salinispora arenicola (strain CNS-205)</name>
    <dbReference type="NCBI Taxonomy" id="391037"/>
    <lineage>
        <taxon>Bacteria</taxon>
        <taxon>Bacillati</taxon>
        <taxon>Actinomycetota</taxon>
        <taxon>Actinomycetes</taxon>
        <taxon>Micromonosporales</taxon>
        <taxon>Micromonosporaceae</taxon>
        <taxon>Salinispora</taxon>
    </lineage>
</organism>
<keyword id="KW-0227">DNA damage</keyword>
<keyword id="KW-0234">DNA repair</keyword>
<keyword id="KW-0235">DNA replication</keyword>
<keyword id="KW-0436">Ligase</keyword>
<keyword id="KW-0460">Magnesium</keyword>
<keyword id="KW-0464">Manganese</keyword>
<keyword id="KW-0479">Metal-binding</keyword>
<keyword id="KW-0520">NAD</keyword>
<keyword id="KW-0862">Zinc</keyword>
<protein>
    <recommendedName>
        <fullName evidence="1">DNA ligase</fullName>
        <ecNumber evidence="1">6.5.1.2</ecNumber>
    </recommendedName>
    <alternativeName>
        <fullName evidence="1">Polydeoxyribonucleotide synthase [NAD(+)]</fullName>
    </alternativeName>
</protein>
<proteinExistence type="inferred from homology"/>
<reference key="1">
    <citation type="submission" date="2007-10" db="EMBL/GenBank/DDBJ databases">
        <title>Complete sequence of Salinispora arenicola CNS-205.</title>
        <authorList>
            <consortium name="US DOE Joint Genome Institute"/>
            <person name="Copeland A."/>
            <person name="Lucas S."/>
            <person name="Lapidus A."/>
            <person name="Barry K."/>
            <person name="Glavina del Rio T."/>
            <person name="Dalin E."/>
            <person name="Tice H."/>
            <person name="Pitluck S."/>
            <person name="Foster B."/>
            <person name="Schmutz J."/>
            <person name="Larimer F."/>
            <person name="Land M."/>
            <person name="Hauser L."/>
            <person name="Kyrpides N."/>
            <person name="Ivanova N."/>
            <person name="Jensen P.R."/>
            <person name="Moore B.S."/>
            <person name="Penn K."/>
            <person name="Jenkins C."/>
            <person name="Udwary D."/>
            <person name="Xiang L."/>
            <person name="Gontang E."/>
            <person name="Richardson P."/>
        </authorList>
    </citation>
    <scope>NUCLEOTIDE SEQUENCE [LARGE SCALE GENOMIC DNA]</scope>
    <source>
        <strain>CNS-205</strain>
    </source>
</reference>
<evidence type="ECO:0000255" key="1">
    <source>
        <dbReference type="HAMAP-Rule" id="MF_01588"/>
    </source>
</evidence>
<evidence type="ECO:0000256" key="2">
    <source>
        <dbReference type="SAM" id="MobiDB-lite"/>
    </source>
</evidence>
<feature type="chain" id="PRO_0000340375" description="DNA ligase">
    <location>
        <begin position="1"/>
        <end position="710"/>
    </location>
</feature>
<feature type="domain" description="BRCT" evidence="1">
    <location>
        <begin position="619"/>
        <end position="708"/>
    </location>
</feature>
<feature type="region of interest" description="Disordered" evidence="2">
    <location>
        <begin position="1"/>
        <end position="26"/>
    </location>
</feature>
<feature type="active site" description="N6-AMP-lysine intermediate" evidence="1">
    <location>
        <position position="134"/>
    </location>
</feature>
<feature type="binding site" evidence="1">
    <location>
        <begin position="53"/>
        <end position="57"/>
    </location>
    <ligand>
        <name>NAD(+)</name>
        <dbReference type="ChEBI" id="CHEBI:57540"/>
    </ligand>
</feature>
<feature type="binding site" evidence="1">
    <location>
        <begin position="102"/>
        <end position="103"/>
    </location>
    <ligand>
        <name>NAD(+)</name>
        <dbReference type="ChEBI" id="CHEBI:57540"/>
    </ligand>
</feature>
<feature type="binding site" evidence="1">
    <location>
        <position position="132"/>
    </location>
    <ligand>
        <name>NAD(+)</name>
        <dbReference type="ChEBI" id="CHEBI:57540"/>
    </ligand>
</feature>
<feature type="binding site" evidence="1">
    <location>
        <position position="155"/>
    </location>
    <ligand>
        <name>NAD(+)</name>
        <dbReference type="ChEBI" id="CHEBI:57540"/>
    </ligand>
</feature>
<feature type="binding site" evidence="1">
    <location>
        <position position="196"/>
    </location>
    <ligand>
        <name>NAD(+)</name>
        <dbReference type="ChEBI" id="CHEBI:57540"/>
    </ligand>
</feature>
<feature type="binding site" evidence="1">
    <location>
        <position position="312"/>
    </location>
    <ligand>
        <name>NAD(+)</name>
        <dbReference type="ChEBI" id="CHEBI:57540"/>
    </ligand>
</feature>
<feature type="binding site" evidence="1">
    <location>
        <position position="336"/>
    </location>
    <ligand>
        <name>NAD(+)</name>
        <dbReference type="ChEBI" id="CHEBI:57540"/>
    </ligand>
</feature>
<feature type="binding site" evidence="1">
    <location>
        <position position="430"/>
    </location>
    <ligand>
        <name>Zn(2+)</name>
        <dbReference type="ChEBI" id="CHEBI:29105"/>
    </ligand>
</feature>
<feature type="binding site" evidence="1">
    <location>
        <position position="433"/>
    </location>
    <ligand>
        <name>Zn(2+)</name>
        <dbReference type="ChEBI" id="CHEBI:29105"/>
    </ligand>
</feature>
<feature type="binding site" evidence="1">
    <location>
        <position position="449"/>
    </location>
    <ligand>
        <name>Zn(2+)</name>
        <dbReference type="ChEBI" id="CHEBI:29105"/>
    </ligand>
</feature>
<feature type="binding site" evidence="1">
    <location>
        <position position="455"/>
    </location>
    <ligand>
        <name>Zn(2+)</name>
        <dbReference type="ChEBI" id="CHEBI:29105"/>
    </ligand>
</feature>
<accession>A8M5E3</accession>
<comment type="function">
    <text evidence="1">DNA ligase that catalyzes the formation of phosphodiester linkages between 5'-phosphoryl and 3'-hydroxyl groups in double-stranded DNA using NAD as a coenzyme and as the energy source for the reaction. It is essential for DNA replication and repair of damaged DNA.</text>
</comment>
<comment type="catalytic activity">
    <reaction evidence="1">
        <text>NAD(+) + (deoxyribonucleotide)n-3'-hydroxyl + 5'-phospho-(deoxyribonucleotide)m = (deoxyribonucleotide)n+m + AMP + beta-nicotinamide D-nucleotide.</text>
        <dbReference type="EC" id="6.5.1.2"/>
    </reaction>
</comment>
<comment type="cofactor">
    <cofactor evidence="1">
        <name>Mg(2+)</name>
        <dbReference type="ChEBI" id="CHEBI:18420"/>
    </cofactor>
    <cofactor evidence="1">
        <name>Mn(2+)</name>
        <dbReference type="ChEBI" id="CHEBI:29035"/>
    </cofactor>
</comment>
<comment type="similarity">
    <text evidence="1">Belongs to the NAD-dependent DNA ligase family. LigA subfamily.</text>
</comment>
<dbReference type="EC" id="6.5.1.2" evidence="1"/>
<dbReference type="EMBL" id="CP000850">
    <property type="protein sequence ID" value="ABV97017.1"/>
    <property type="molecule type" value="Genomic_DNA"/>
</dbReference>
<dbReference type="SMR" id="A8M5E3"/>
<dbReference type="STRING" id="391037.Sare_1109"/>
<dbReference type="KEGG" id="saq:Sare_1109"/>
<dbReference type="PATRIC" id="fig|391037.6.peg.1125"/>
<dbReference type="eggNOG" id="COG0272">
    <property type="taxonomic scope" value="Bacteria"/>
</dbReference>
<dbReference type="HOGENOM" id="CLU_007764_2_0_11"/>
<dbReference type="OrthoDB" id="9759736at2"/>
<dbReference type="GO" id="GO:0005829">
    <property type="term" value="C:cytosol"/>
    <property type="evidence" value="ECO:0007669"/>
    <property type="project" value="TreeGrafter"/>
</dbReference>
<dbReference type="GO" id="GO:0003677">
    <property type="term" value="F:DNA binding"/>
    <property type="evidence" value="ECO:0007669"/>
    <property type="project" value="InterPro"/>
</dbReference>
<dbReference type="GO" id="GO:0003911">
    <property type="term" value="F:DNA ligase (NAD+) activity"/>
    <property type="evidence" value="ECO:0007669"/>
    <property type="project" value="UniProtKB-UniRule"/>
</dbReference>
<dbReference type="GO" id="GO:0046872">
    <property type="term" value="F:metal ion binding"/>
    <property type="evidence" value="ECO:0007669"/>
    <property type="project" value="UniProtKB-KW"/>
</dbReference>
<dbReference type="GO" id="GO:0006281">
    <property type="term" value="P:DNA repair"/>
    <property type="evidence" value="ECO:0007669"/>
    <property type="project" value="UniProtKB-KW"/>
</dbReference>
<dbReference type="GO" id="GO:0006260">
    <property type="term" value="P:DNA replication"/>
    <property type="evidence" value="ECO:0007669"/>
    <property type="project" value="UniProtKB-KW"/>
</dbReference>
<dbReference type="CDD" id="cd17748">
    <property type="entry name" value="BRCT_DNA_ligase_like"/>
    <property type="match status" value="1"/>
</dbReference>
<dbReference type="CDD" id="cd00114">
    <property type="entry name" value="LIGANc"/>
    <property type="match status" value="1"/>
</dbReference>
<dbReference type="FunFam" id="1.10.150.20:FF:000006">
    <property type="entry name" value="DNA ligase"/>
    <property type="match status" value="1"/>
</dbReference>
<dbReference type="FunFam" id="1.10.287.610:FF:000002">
    <property type="entry name" value="DNA ligase"/>
    <property type="match status" value="1"/>
</dbReference>
<dbReference type="FunFam" id="2.40.50.140:FF:000012">
    <property type="entry name" value="DNA ligase"/>
    <property type="match status" value="1"/>
</dbReference>
<dbReference type="FunFam" id="3.30.470.30:FF:000001">
    <property type="entry name" value="DNA ligase"/>
    <property type="match status" value="1"/>
</dbReference>
<dbReference type="FunFam" id="3.40.50.10190:FF:000054">
    <property type="entry name" value="DNA ligase"/>
    <property type="match status" value="1"/>
</dbReference>
<dbReference type="Gene3D" id="6.20.10.30">
    <property type="match status" value="1"/>
</dbReference>
<dbReference type="Gene3D" id="1.10.150.20">
    <property type="entry name" value="5' to 3' exonuclease, C-terminal subdomain"/>
    <property type="match status" value="2"/>
</dbReference>
<dbReference type="Gene3D" id="3.40.50.10190">
    <property type="entry name" value="BRCT domain"/>
    <property type="match status" value="1"/>
</dbReference>
<dbReference type="Gene3D" id="3.30.470.30">
    <property type="entry name" value="DNA ligase/mRNA capping enzyme"/>
    <property type="match status" value="1"/>
</dbReference>
<dbReference type="Gene3D" id="1.10.287.610">
    <property type="entry name" value="Helix hairpin bin"/>
    <property type="match status" value="1"/>
</dbReference>
<dbReference type="Gene3D" id="2.40.50.140">
    <property type="entry name" value="Nucleic acid-binding proteins"/>
    <property type="match status" value="1"/>
</dbReference>
<dbReference type="HAMAP" id="MF_01588">
    <property type="entry name" value="DNA_ligase_A"/>
    <property type="match status" value="1"/>
</dbReference>
<dbReference type="InterPro" id="IPR001357">
    <property type="entry name" value="BRCT_dom"/>
</dbReference>
<dbReference type="InterPro" id="IPR036420">
    <property type="entry name" value="BRCT_dom_sf"/>
</dbReference>
<dbReference type="InterPro" id="IPR041663">
    <property type="entry name" value="DisA/LigA_HHH"/>
</dbReference>
<dbReference type="InterPro" id="IPR001679">
    <property type="entry name" value="DNA_ligase"/>
</dbReference>
<dbReference type="InterPro" id="IPR018239">
    <property type="entry name" value="DNA_ligase_AS"/>
</dbReference>
<dbReference type="InterPro" id="IPR033136">
    <property type="entry name" value="DNA_ligase_CS"/>
</dbReference>
<dbReference type="InterPro" id="IPR013839">
    <property type="entry name" value="DNAligase_adenylation"/>
</dbReference>
<dbReference type="InterPro" id="IPR013840">
    <property type="entry name" value="DNAligase_N"/>
</dbReference>
<dbReference type="InterPro" id="IPR003583">
    <property type="entry name" value="Hlx-hairpin-Hlx_DNA-bd_motif"/>
</dbReference>
<dbReference type="InterPro" id="IPR012340">
    <property type="entry name" value="NA-bd_OB-fold"/>
</dbReference>
<dbReference type="InterPro" id="IPR004150">
    <property type="entry name" value="NAD_DNA_ligase_OB"/>
</dbReference>
<dbReference type="InterPro" id="IPR010994">
    <property type="entry name" value="RuvA_2-like"/>
</dbReference>
<dbReference type="InterPro" id="IPR004149">
    <property type="entry name" value="Znf_DNAligase_C4"/>
</dbReference>
<dbReference type="NCBIfam" id="TIGR00575">
    <property type="entry name" value="dnlj"/>
    <property type="match status" value="1"/>
</dbReference>
<dbReference type="NCBIfam" id="NF005932">
    <property type="entry name" value="PRK07956.1"/>
    <property type="match status" value="1"/>
</dbReference>
<dbReference type="PANTHER" id="PTHR23389">
    <property type="entry name" value="CHROMOSOME TRANSMISSION FIDELITY FACTOR 18"/>
    <property type="match status" value="1"/>
</dbReference>
<dbReference type="PANTHER" id="PTHR23389:SF9">
    <property type="entry name" value="DNA LIGASE"/>
    <property type="match status" value="1"/>
</dbReference>
<dbReference type="Pfam" id="PF00533">
    <property type="entry name" value="BRCT"/>
    <property type="match status" value="1"/>
</dbReference>
<dbReference type="Pfam" id="PF01653">
    <property type="entry name" value="DNA_ligase_aden"/>
    <property type="match status" value="1"/>
</dbReference>
<dbReference type="Pfam" id="PF03120">
    <property type="entry name" value="DNA_ligase_OB"/>
    <property type="match status" value="1"/>
</dbReference>
<dbReference type="Pfam" id="PF03119">
    <property type="entry name" value="DNA_ligase_ZBD"/>
    <property type="match status" value="1"/>
</dbReference>
<dbReference type="Pfam" id="PF12826">
    <property type="entry name" value="HHH_2"/>
    <property type="match status" value="1"/>
</dbReference>
<dbReference type="Pfam" id="PF22745">
    <property type="entry name" value="Nlig-Ia"/>
    <property type="match status" value="1"/>
</dbReference>
<dbReference type="PIRSF" id="PIRSF001604">
    <property type="entry name" value="LigA"/>
    <property type="match status" value="1"/>
</dbReference>
<dbReference type="SMART" id="SM00292">
    <property type="entry name" value="BRCT"/>
    <property type="match status" value="1"/>
</dbReference>
<dbReference type="SMART" id="SM00278">
    <property type="entry name" value="HhH1"/>
    <property type="match status" value="2"/>
</dbReference>
<dbReference type="SMART" id="SM00532">
    <property type="entry name" value="LIGANc"/>
    <property type="match status" value="1"/>
</dbReference>
<dbReference type="SUPFAM" id="SSF52113">
    <property type="entry name" value="BRCT domain"/>
    <property type="match status" value="1"/>
</dbReference>
<dbReference type="SUPFAM" id="SSF56091">
    <property type="entry name" value="DNA ligase/mRNA capping enzyme, catalytic domain"/>
    <property type="match status" value="1"/>
</dbReference>
<dbReference type="SUPFAM" id="SSF50249">
    <property type="entry name" value="Nucleic acid-binding proteins"/>
    <property type="match status" value="1"/>
</dbReference>
<dbReference type="SUPFAM" id="SSF47781">
    <property type="entry name" value="RuvA domain 2-like"/>
    <property type="match status" value="1"/>
</dbReference>
<dbReference type="PROSITE" id="PS50172">
    <property type="entry name" value="BRCT"/>
    <property type="match status" value="1"/>
</dbReference>
<dbReference type="PROSITE" id="PS01055">
    <property type="entry name" value="DNA_LIGASE_N1"/>
    <property type="match status" value="1"/>
</dbReference>
<dbReference type="PROSITE" id="PS01056">
    <property type="entry name" value="DNA_LIGASE_N2"/>
    <property type="match status" value="1"/>
</dbReference>